<accession>B6J235</accession>
<reference key="1">
    <citation type="journal article" date="2009" name="Infect. Immun.">
        <title>Comparative genomics reveal extensive transposon-mediated genomic plasticity and diversity among potential effector proteins within the genus Coxiella.</title>
        <authorList>
            <person name="Beare P.A."/>
            <person name="Unsworth N."/>
            <person name="Andoh M."/>
            <person name="Voth D.E."/>
            <person name="Omsland A."/>
            <person name="Gilk S.D."/>
            <person name="Williams K.P."/>
            <person name="Sobral B.W."/>
            <person name="Kupko J.J. III"/>
            <person name="Porcella S.F."/>
            <person name="Samuel J.E."/>
            <person name="Heinzen R.A."/>
        </authorList>
    </citation>
    <scope>NUCLEOTIDE SEQUENCE [LARGE SCALE GENOMIC DNA]</scope>
    <source>
        <strain>CbuG_Q212</strain>
    </source>
</reference>
<dbReference type="EC" id="1.3.1.9" evidence="1"/>
<dbReference type="EMBL" id="CP001019">
    <property type="protein sequence ID" value="ACJ19013.1"/>
    <property type="molecule type" value="Genomic_DNA"/>
</dbReference>
<dbReference type="RefSeq" id="WP_005771488.1">
    <property type="nucleotide sequence ID" value="NC_011527.1"/>
</dbReference>
<dbReference type="SMR" id="B6J235"/>
<dbReference type="KEGG" id="cbg:CbuG_1738"/>
<dbReference type="HOGENOM" id="CLU_057698_1_0_6"/>
<dbReference type="UniPathway" id="UPA00094"/>
<dbReference type="GO" id="GO:0004318">
    <property type="term" value="F:enoyl-[acyl-carrier-protein] reductase (NADH) activity"/>
    <property type="evidence" value="ECO:0007669"/>
    <property type="project" value="UniProtKB-UniRule"/>
</dbReference>
<dbReference type="GO" id="GO:0051287">
    <property type="term" value="F:NAD binding"/>
    <property type="evidence" value="ECO:0007669"/>
    <property type="project" value="UniProtKB-UniRule"/>
</dbReference>
<dbReference type="GO" id="GO:0050343">
    <property type="term" value="F:trans-2-enoyl-CoA reductase (NADH) activity"/>
    <property type="evidence" value="ECO:0007669"/>
    <property type="project" value="TreeGrafter"/>
</dbReference>
<dbReference type="GO" id="GO:0006633">
    <property type="term" value="P:fatty acid biosynthetic process"/>
    <property type="evidence" value="ECO:0007669"/>
    <property type="project" value="UniProtKB-UniRule"/>
</dbReference>
<dbReference type="FunFam" id="3.40.50.720:FF:000221">
    <property type="entry name" value="Enoyl-[acyl-carrier-protein] reductase [NADH]"/>
    <property type="match status" value="1"/>
</dbReference>
<dbReference type="Gene3D" id="3.40.50.720">
    <property type="entry name" value="NAD(P)-binding Rossmann-like Domain"/>
    <property type="match status" value="1"/>
</dbReference>
<dbReference type="HAMAP" id="MF_01838">
    <property type="entry name" value="FabV_reductase"/>
    <property type="match status" value="1"/>
</dbReference>
<dbReference type="InterPro" id="IPR024906">
    <property type="entry name" value="Eno_Rdtase_FAD-bd_dom"/>
</dbReference>
<dbReference type="InterPro" id="IPR024910">
    <property type="entry name" value="Enoyl-CoA_Rdtase_cat_dom"/>
</dbReference>
<dbReference type="InterPro" id="IPR050048">
    <property type="entry name" value="FabV-like_NADH_b"/>
</dbReference>
<dbReference type="InterPro" id="IPR010758">
    <property type="entry name" value="Trans-2-enoyl-CoA_reductase"/>
</dbReference>
<dbReference type="NCBIfam" id="NF043048">
    <property type="entry name" value="EnoyACPredFabV"/>
    <property type="match status" value="1"/>
</dbReference>
<dbReference type="NCBIfam" id="NF010177">
    <property type="entry name" value="PRK13656.1"/>
    <property type="match status" value="1"/>
</dbReference>
<dbReference type="PANTHER" id="PTHR37480">
    <property type="entry name" value="ENOYL-[ACYL-CARRIER-PROTEIN] REDUCTASE [NADH]"/>
    <property type="match status" value="1"/>
</dbReference>
<dbReference type="PANTHER" id="PTHR37480:SF1">
    <property type="entry name" value="ENOYL-[ACYL-CARRIER-PROTEIN] REDUCTASE [NADH]"/>
    <property type="match status" value="1"/>
</dbReference>
<dbReference type="Pfam" id="PF07055">
    <property type="entry name" value="Eno-Rase_FAD_bd"/>
    <property type="match status" value="1"/>
</dbReference>
<dbReference type="Pfam" id="PF12242">
    <property type="entry name" value="Eno-Rase_NADH_b"/>
    <property type="match status" value="1"/>
</dbReference>
<dbReference type="Pfam" id="PF12241">
    <property type="entry name" value="Enoyl_reductase"/>
    <property type="match status" value="1"/>
</dbReference>
<protein>
    <recommendedName>
        <fullName evidence="1">Enoyl-[acyl-carrier-protein] reductase [NADH]</fullName>
        <shortName evidence="1">ENR</shortName>
        <ecNumber evidence="1">1.3.1.9</ecNumber>
    </recommendedName>
</protein>
<keyword id="KW-0275">Fatty acid biosynthesis</keyword>
<keyword id="KW-0276">Fatty acid metabolism</keyword>
<keyword id="KW-0444">Lipid biosynthesis</keyword>
<keyword id="KW-0443">Lipid metabolism</keyword>
<keyword id="KW-0520">NAD</keyword>
<keyword id="KW-0560">Oxidoreductase</keyword>
<feature type="chain" id="PRO_1000188363" description="Enoyl-[acyl-carrier-protein] reductase [NADH]">
    <location>
        <begin position="1"/>
        <end position="406"/>
    </location>
</feature>
<feature type="active site" description="Proton donor" evidence="1">
    <location>
        <position position="236"/>
    </location>
</feature>
<feature type="binding site" evidence="1">
    <location>
        <begin position="48"/>
        <end position="53"/>
    </location>
    <ligand>
        <name>NAD(+)</name>
        <dbReference type="ChEBI" id="CHEBI:57540"/>
    </ligand>
</feature>
<feature type="binding site" evidence="1">
    <location>
        <begin position="74"/>
        <end position="75"/>
    </location>
    <ligand>
        <name>NAD(+)</name>
        <dbReference type="ChEBI" id="CHEBI:57540"/>
    </ligand>
</feature>
<feature type="binding site" evidence="1">
    <location>
        <begin position="111"/>
        <end position="112"/>
    </location>
    <ligand>
        <name>NAD(+)</name>
        <dbReference type="ChEBI" id="CHEBI:57540"/>
    </ligand>
</feature>
<feature type="binding site" evidence="1">
    <location>
        <begin position="140"/>
        <end position="141"/>
    </location>
    <ligand>
        <name>NAD(+)</name>
        <dbReference type="ChEBI" id="CHEBI:57540"/>
    </ligand>
</feature>
<feature type="binding site" evidence="1">
    <location>
        <position position="226"/>
    </location>
    <ligand>
        <name>substrate</name>
    </ligand>
</feature>
<feature type="binding site" evidence="1">
    <location>
        <position position="245"/>
    </location>
    <ligand>
        <name>NAD(+)</name>
        <dbReference type="ChEBI" id="CHEBI:57540"/>
    </ligand>
</feature>
<feature type="binding site" evidence="1">
    <location>
        <begin position="275"/>
        <end position="277"/>
    </location>
    <ligand>
        <name>NAD(+)</name>
        <dbReference type="ChEBI" id="CHEBI:57540"/>
    </ligand>
</feature>
<feature type="site" description="Plays an important role in discriminating NADH against NADPH" evidence="1">
    <location>
        <position position="75"/>
    </location>
</feature>
<organism>
    <name type="scientific">Coxiella burnetii (strain CbuG_Q212)</name>
    <name type="common">Coxiella burnetii (strain Q212)</name>
    <dbReference type="NCBI Taxonomy" id="434923"/>
    <lineage>
        <taxon>Bacteria</taxon>
        <taxon>Pseudomonadati</taxon>
        <taxon>Pseudomonadota</taxon>
        <taxon>Gammaproteobacteria</taxon>
        <taxon>Legionellales</taxon>
        <taxon>Coxiellaceae</taxon>
        <taxon>Coxiella</taxon>
    </lineage>
</organism>
<evidence type="ECO:0000255" key="1">
    <source>
        <dbReference type="HAMAP-Rule" id="MF_01838"/>
    </source>
</evidence>
<proteinExistence type="inferred from homology"/>
<comment type="function">
    <text evidence="1">Involved in the final reduction of the elongation cycle of fatty acid synthesis (FAS II). Catalyzes the reduction of a carbon-carbon double bond in an enoyl moiety that is covalently linked to an acyl carrier protein (ACP).</text>
</comment>
<comment type="catalytic activity">
    <reaction evidence="1">
        <text>a 2,3-saturated acyl-[ACP] + NAD(+) = a (2E)-enoyl-[ACP] + NADH + H(+)</text>
        <dbReference type="Rhea" id="RHEA:10240"/>
        <dbReference type="Rhea" id="RHEA-COMP:9925"/>
        <dbReference type="Rhea" id="RHEA-COMP:9926"/>
        <dbReference type="ChEBI" id="CHEBI:15378"/>
        <dbReference type="ChEBI" id="CHEBI:57540"/>
        <dbReference type="ChEBI" id="CHEBI:57945"/>
        <dbReference type="ChEBI" id="CHEBI:78784"/>
        <dbReference type="ChEBI" id="CHEBI:78785"/>
        <dbReference type="EC" id="1.3.1.9"/>
    </reaction>
</comment>
<comment type="pathway">
    <text evidence="1">Lipid metabolism; fatty acid biosynthesis.</text>
</comment>
<comment type="subunit">
    <text evidence="1">Monomer.</text>
</comment>
<comment type="similarity">
    <text evidence="1">Belongs to the TER reductase family.</text>
</comment>
<sequence length="406" mass="44888">MIVQPKVRGFICTTAHPEGCARHVGEWINYAKQQPSLTGGPQKVLIIGASTGFGLASRIVAAFGAGAKTIGVFFERPASGKRTASPGWYNTAAFEKTALAAGLYAKSINGDAFSDEIKQQTIDLIQKDWQGGVDLVIYSIASPRRVHPRTGEIFNSVLKPIGQTYHNKTVDVMTGEVSPVSIEPATEKEIRDTEAVMGGDDWALWINALFKYNCLAEGVKTVAFTYIGPELTHAVYRNGTIGRAKLHLEKTARELDTQLESALSGQALISVNKALVTQASAAIPVVPLYISLLYKIMKEKNIHEGCIEQMWRLFKERLYSNQNIPTDSEGRIRIDDWEMREDVQAEIKRLWESINTGNVETLSDIAGYREDFYKLFGFGLNGIDYERGVEIEKAIPSITVTPENPE</sequence>
<gene>
    <name evidence="1" type="primary">fabV</name>
    <name type="ordered locus">CbuG_1738</name>
</gene>
<name>FABV_COXB2</name>